<accession>O78778</accession>
<protein>
    <recommendedName>
        <fullName>Cytochrome b</fullName>
    </recommendedName>
    <alternativeName>
        <fullName>Complex III subunit 3</fullName>
    </alternativeName>
    <alternativeName>
        <fullName>Complex III subunit III</fullName>
    </alternativeName>
    <alternativeName>
        <fullName>Cytochrome b-c1 complex subunit 3</fullName>
    </alternativeName>
    <alternativeName>
        <fullName>Ubiquinol-cytochrome-c reductase complex cytochrome b subunit</fullName>
    </alternativeName>
</protein>
<gene>
    <name type="primary">MT-CYB</name>
    <name type="synonym">COB</name>
    <name type="synonym">CYTB</name>
    <name type="synonym">MTCYB</name>
</gene>
<comment type="function">
    <text evidence="2">Component of the ubiquinol-cytochrome c reductase complex (complex III or cytochrome b-c1 complex) that is part of the mitochondrial respiratory chain. The b-c1 complex mediates electron transfer from ubiquinol to cytochrome c. Contributes to the generation of a proton gradient across the mitochondrial membrane that is then used for ATP synthesis.</text>
</comment>
<comment type="cofactor">
    <cofactor evidence="2">
        <name>heme b</name>
        <dbReference type="ChEBI" id="CHEBI:60344"/>
    </cofactor>
    <text evidence="2">Binds 2 heme b groups non-covalently.</text>
</comment>
<comment type="subunit">
    <text evidence="2">The cytochrome bc1 complex contains 11 subunits: 3 respiratory subunits (MT-CYB, CYC1 and UQCRFS1), 2 core proteins (UQCRC1 and UQCRC2) and 6 low-molecular weight proteins (UQCRH/QCR6, UQCRB/QCR7, UQCRQ/QCR8, UQCR10/QCR9, UQCR11/QCR10 and a cleavage product of UQCRFS1). This cytochrome bc1 complex then forms a dimer.</text>
</comment>
<comment type="subcellular location">
    <subcellularLocation>
        <location evidence="2">Mitochondrion inner membrane</location>
        <topology evidence="2">Multi-pass membrane protein</topology>
    </subcellularLocation>
</comment>
<comment type="miscellaneous">
    <text evidence="1">Heme 1 (or BL or b562) is low-potential and absorbs at about 562 nm, and heme 2 (or BH or b566) is high-potential and absorbs at about 566 nm.</text>
</comment>
<comment type="similarity">
    <text evidence="3 4">Belongs to the cytochrome b family.</text>
</comment>
<comment type="caution">
    <text evidence="2">The full-length protein contains only eight transmembrane helices, not nine as predicted by bioinformatics tools.</text>
</comment>
<organism>
    <name type="scientific">Ovis ammon darwini</name>
    <name type="common">Gobi argali</name>
    <dbReference type="NCBI Taxonomy" id="72760"/>
    <lineage>
        <taxon>Eukaryota</taxon>
        <taxon>Metazoa</taxon>
        <taxon>Chordata</taxon>
        <taxon>Craniata</taxon>
        <taxon>Vertebrata</taxon>
        <taxon>Euteleostomi</taxon>
        <taxon>Mammalia</taxon>
        <taxon>Eutheria</taxon>
        <taxon>Laurasiatheria</taxon>
        <taxon>Artiodactyla</taxon>
        <taxon>Ruminantia</taxon>
        <taxon>Pecora</taxon>
        <taxon>Bovidae</taxon>
        <taxon>Caprinae</taxon>
        <taxon>Ovis</taxon>
    </lineage>
</organism>
<sequence>MINIRKTHPLMKIVNNAFIDLPAPSNISSWWNFGSLLGICLILQILTGLFLAMHYTPDTTTAFSSVTHICRDVNYGWIIRYMHANGASMFFICLFMHVGRGLYYGSYTFLETWNIGVILLFATMATAFMGYVLPWGQMSFWGATVITNLLSAIPYIGTNLVEWIWGGFSVDKATLTRFFAFHFIFPFIIAALAMVHLLFLHETGSNNPTGIPSDTDKIPFHPYYTIKDILGAILLILTLMLLVLFTPDLLGDPDNYTPANPLNTPPHIKPEWYFLFAYAILRSIPNKLGGVLALVLSILVLVIMPLLHTSKQRSMMFRPISQCMFWILVADLLTLTWIGGQPVEHPYIIIGQLASIMYFLIILVMMPVASIIENNLLKW</sequence>
<proteinExistence type="inferred from homology"/>
<keyword id="KW-0249">Electron transport</keyword>
<keyword id="KW-0349">Heme</keyword>
<keyword id="KW-0408">Iron</keyword>
<keyword id="KW-0472">Membrane</keyword>
<keyword id="KW-0479">Metal-binding</keyword>
<keyword id="KW-0496">Mitochondrion</keyword>
<keyword id="KW-0999">Mitochondrion inner membrane</keyword>
<keyword id="KW-0679">Respiratory chain</keyword>
<keyword id="KW-0812">Transmembrane</keyword>
<keyword id="KW-1133">Transmembrane helix</keyword>
<keyword id="KW-0813">Transport</keyword>
<keyword id="KW-0830">Ubiquinone</keyword>
<name>CYB_OVIAD</name>
<reference key="1">
    <citation type="journal article" date="1998" name="J. Mammal. Evol.">
        <title>Molecular systematics of the subfamily Caprinae (Artiodactyla, Bovidae) as determined from cytochrome b sequences.</title>
        <authorList>
            <person name="Hassanin A."/>
            <person name="Pasquet E."/>
            <person name="Vigne J.-D."/>
        </authorList>
    </citation>
    <scope>NUCLEOTIDE SEQUENCE [GENOMIC DNA]</scope>
</reference>
<evidence type="ECO:0000250" key="1"/>
<evidence type="ECO:0000250" key="2">
    <source>
        <dbReference type="UniProtKB" id="P00157"/>
    </source>
</evidence>
<evidence type="ECO:0000255" key="3">
    <source>
        <dbReference type="PROSITE-ProRule" id="PRU00967"/>
    </source>
</evidence>
<evidence type="ECO:0000255" key="4">
    <source>
        <dbReference type="PROSITE-ProRule" id="PRU00968"/>
    </source>
</evidence>
<dbReference type="EMBL" id="AF034727">
    <property type="protein sequence ID" value="AAC31682.1"/>
    <property type="molecule type" value="Genomic_DNA"/>
</dbReference>
<dbReference type="SMR" id="O78778"/>
<dbReference type="GO" id="GO:0005743">
    <property type="term" value="C:mitochondrial inner membrane"/>
    <property type="evidence" value="ECO:0007669"/>
    <property type="project" value="UniProtKB-SubCell"/>
</dbReference>
<dbReference type="GO" id="GO:0045275">
    <property type="term" value="C:respiratory chain complex III"/>
    <property type="evidence" value="ECO:0007669"/>
    <property type="project" value="InterPro"/>
</dbReference>
<dbReference type="GO" id="GO:0046872">
    <property type="term" value="F:metal ion binding"/>
    <property type="evidence" value="ECO:0007669"/>
    <property type="project" value="UniProtKB-KW"/>
</dbReference>
<dbReference type="GO" id="GO:0008121">
    <property type="term" value="F:ubiquinol-cytochrome-c reductase activity"/>
    <property type="evidence" value="ECO:0007669"/>
    <property type="project" value="InterPro"/>
</dbReference>
<dbReference type="GO" id="GO:0006122">
    <property type="term" value="P:mitochondrial electron transport, ubiquinol to cytochrome c"/>
    <property type="evidence" value="ECO:0007669"/>
    <property type="project" value="TreeGrafter"/>
</dbReference>
<dbReference type="CDD" id="cd00290">
    <property type="entry name" value="cytochrome_b_C"/>
    <property type="match status" value="1"/>
</dbReference>
<dbReference type="CDD" id="cd00284">
    <property type="entry name" value="Cytochrome_b_N"/>
    <property type="match status" value="1"/>
</dbReference>
<dbReference type="FunFam" id="1.20.810.10:FF:000002">
    <property type="entry name" value="Cytochrome b"/>
    <property type="match status" value="1"/>
</dbReference>
<dbReference type="Gene3D" id="1.20.810.10">
    <property type="entry name" value="Cytochrome Bc1 Complex, Chain C"/>
    <property type="match status" value="1"/>
</dbReference>
<dbReference type="InterPro" id="IPR005798">
    <property type="entry name" value="Cyt_b/b6_C"/>
</dbReference>
<dbReference type="InterPro" id="IPR036150">
    <property type="entry name" value="Cyt_b/b6_C_sf"/>
</dbReference>
<dbReference type="InterPro" id="IPR005797">
    <property type="entry name" value="Cyt_b/b6_N"/>
</dbReference>
<dbReference type="InterPro" id="IPR027387">
    <property type="entry name" value="Cytb/b6-like_sf"/>
</dbReference>
<dbReference type="InterPro" id="IPR030689">
    <property type="entry name" value="Cytochrome_b"/>
</dbReference>
<dbReference type="InterPro" id="IPR048260">
    <property type="entry name" value="Cytochrome_b_C_euk/bac"/>
</dbReference>
<dbReference type="InterPro" id="IPR048259">
    <property type="entry name" value="Cytochrome_b_N_euk/bac"/>
</dbReference>
<dbReference type="InterPro" id="IPR016174">
    <property type="entry name" value="Di-haem_cyt_TM"/>
</dbReference>
<dbReference type="PANTHER" id="PTHR19271">
    <property type="entry name" value="CYTOCHROME B"/>
    <property type="match status" value="1"/>
</dbReference>
<dbReference type="PANTHER" id="PTHR19271:SF16">
    <property type="entry name" value="CYTOCHROME B"/>
    <property type="match status" value="1"/>
</dbReference>
<dbReference type="Pfam" id="PF00032">
    <property type="entry name" value="Cytochrom_B_C"/>
    <property type="match status" value="1"/>
</dbReference>
<dbReference type="Pfam" id="PF00033">
    <property type="entry name" value="Cytochrome_B"/>
    <property type="match status" value="1"/>
</dbReference>
<dbReference type="PIRSF" id="PIRSF038885">
    <property type="entry name" value="COB"/>
    <property type="match status" value="1"/>
</dbReference>
<dbReference type="SUPFAM" id="SSF81648">
    <property type="entry name" value="a domain/subunit of cytochrome bc1 complex (Ubiquinol-cytochrome c reductase)"/>
    <property type="match status" value="1"/>
</dbReference>
<dbReference type="SUPFAM" id="SSF81342">
    <property type="entry name" value="Transmembrane di-heme cytochromes"/>
    <property type="match status" value="1"/>
</dbReference>
<dbReference type="PROSITE" id="PS51003">
    <property type="entry name" value="CYTB_CTER"/>
    <property type="match status" value="1"/>
</dbReference>
<dbReference type="PROSITE" id="PS51002">
    <property type="entry name" value="CYTB_NTER"/>
    <property type="match status" value="1"/>
</dbReference>
<feature type="chain" id="PRO_0000061332" description="Cytochrome b">
    <location>
        <begin position="1"/>
        <end position="379"/>
    </location>
</feature>
<feature type="transmembrane region" description="Helical" evidence="2">
    <location>
        <begin position="33"/>
        <end position="53"/>
    </location>
</feature>
<feature type="transmembrane region" description="Helical" evidence="2">
    <location>
        <begin position="77"/>
        <end position="98"/>
    </location>
</feature>
<feature type="transmembrane region" description="Helical" evidence="2">
    <location>
        <begin position="113"/>
        <end position="133"/>
    </location>
</feature>
<feature type="transmembrane region" description="Helical" evidence="2">
    <location>
        <begin position="178"/>
        <end position="198"/>
    </location>
</feature>
<feature type="transmembrane region" description="Helical" evidence="2">
    <location>
        <begin position="226"/>
        <end position="246"/>
    </location>
</feature>
<feature type="transmembrane region" description="Helical" evidence="2">
    <location>
        <begin position="288"/>
        <end position="308"/>
    </location>
</feature>
<feature type="transmembrane region" description="Helical" evidence="2">
    <location>
        <begin position="320"/>
        <end position="340"/>
    </location>
</feature>
<feature type="transmembrane region" description="Helical" evidence="2">
    <location>
        <begin position="347"/>
        <end position="367"/>
    </location>
</feature>
<feature type="binding site" description="axial binding residue" evidence="2">
    <location>
        <position position="83"/>
    </location>
    <ligand>
        <name>heme b</name>
        <dbReference type="ChEBI" id="CHEBI:60344"/>
        <label>b562</label>
    </ligand>
    <ligandPart>
        <name>Fe</name>
        <dbReference type="ChEBI" id="CHEBI:18248"/>
    </ligandPart>
</feature>
<feature type="binding site" description="axial binding residue" evidence="2">
    <location>
        <position position="97"/>
    </location>
    <ligand>
        <name>heme b</name>
        <dbReference type="ChEBI" id="CHEBI:60344"/>
        <label>b566</label>
    </ligand>
    <ligandPart>
        <name>Fe</name>
        <dbReference type="ChEBI" id="CHEBI:18248"/>
    </ligandPart>
</feature>
<feature type="binding site" description="axial binding residue" evidence="2">
    <location>
        <position position="182"/>
    </location>
    <ligand>
        <name>heme b</name>
        <dbReference type="ChEBI" id="CHEBI:60344"/>
        <label>b562</label>
    </ligand>
    <ligandPart>
        <name>Fe</name>
        <dbReference type="ChEBI" id="CHEBI:18248"/>
    </ligandPart>
</feature>
<feature type="binding site" description="axial binding residue" evidence="2">
    <location>
        <position position="196"/>
    </location>
    <ligand>
        <name>heme b</name>
        <dbReference type="ChEBI" id="CHEBI:60344"/>
        <label>b566</label>
    </ligand>
    <ligandPart>
        <name>Fe</name>
        <dbReference type="ChEBI" id="CHEBI:18248"/>
    </ligandPart>
</feature>
<feature type="binding site" evidence="2">
    <location>
        <position position="201"/>
    </location>
    <ligand>
        <name>a ubiquinone</name>
        <dbReference type="ChEBI" id="CHEBI:16389"/>
    </ligand>
</feature>
<geneLocation type="mitochondrion"/>